<sequence length="332" mass="36775">MSTRKKKADAEVAQAATVAASPDIDVEELEGIGRVTGAKLKEKGYYTVRDVAYASVKELAEIVGSEERAQQIVEAARKMLGLHSFISALEVYERRKKIRRISTGVRALDELLGGGIETRAVTEVVGEFGSGKTQLCHQLAVMVQLPEDRGGLGAKAIYIDTENTFRPERIMQIAKARGLDPDQALNNIFYARAYSADHQMVLVEQAKSLIRQHNVALLVVDSVIAHFRAEFPGRENLAERQQKLNKHIADLLRLADAYDVAVVVTNQVMAQPDVFFGNPLRPAGGNILAHGATYRLWLRKSKENIRIAKIFDSPYHPEGEVSFRITEEGLVD</sequence>
<evidence type="ECO:0000255" key="1">
    <source>
        <dbReference type="HAMAP-Rule" id="MF_00348"/>
    </source>
</evidence>
<feature type="chain" id="PRO_1000048393" description="DNA repair and recombination protein RadA">
    <location>
        <begin position="1"/>
        <end position="332"/>
    </location>
</feature>
<feature type="binding site" evidence="1">
    <location>
        <begin position="126"/>
        <end position="133"/>
    </location>
    <ligand>
        <name>ATP</name>
        <dbReference type="ChEBI" id="CHEBI:30616"/>
    </ligand>
</feature>
<comment type="function">
    <text evidence="1">Involved in DNA repair and in homologous recombination. Binds and assemble on single-stranded DNA to form a nucleoprotein filament. Hydrolyzes ATP in a ssDNA-dependent manner and promotes DNA strand exchange between homologous DNA molecules.</text>
</comment>
<comment type="similarity">
    <text evidence="1">Belongs to the eukaryotic RecA-like protein family.</text>
</comment>
<protein>
    <recommendedName>
        <fullName evidence="1">DNA repair and recombination protein RadA</fullName>
    </recommendedName>
</protein>
<organism>
    <name type="scientific">Pyrobaculum calidifontis (strain DSM 21063 / JCM 11548 / VA1)</name>
    <dbReference type="NCBI Taxonomy" id="410359"/>
    <lineage>
        <taxon>Archaea</taxon>
        <taxon>Thermoproteota</taxon>
        <taxon>Thermoprotei</taxon>
        <taxon>Thermoproteales</taxon>
        <taxon>Thermoproteaceae</taxon>
        <taxon>Pyrobaculum</taxon>
    </lineage>
</organism>
<accession>A3MXX9</accession>
<proteinExistence type="inferred from homology"/>
<name>RADA_PYRCJ</name>
<gene>
    <name evidence="1" type="primary">radA</name>
    <name type="ordered locus">Pcal_2081</name>
</gene>
<keyword id="KW-0067">ATP-binding</keyword>
<keyword id="KW-0227">DNA damage</keyword>
<keyword id="KW-0233">DNA recombination</keyword>
<keyword id="KW-0238">DNA-binding</keyword>
<keyword id="KW-0547">Nucleotide-binding</keyword>
<reference key="1">
    <citation type="submission" date="2007-02" db="EMBL/GenBank/DDBJ databases">
        <title>Complete sequence of Pyrobaculum calidifontis JCM 11548.</title>
        <authorList>
            <consortium name="US DOE Joint Genome Institute"/>
            <person name="Copeland A."/>
            <person name="Lucas S."/>
            <person name="Lapidus A."/>
            <person name="Barry K."/>
            <person name="Glavina del Rio T."/>
            <person name="Dalin E."/>
            <person name="Tice H."/>
            <person name="Pitluck S."/>
            <person name="Chain P."/>
            <person name="Malfatti S."/>
            <person name="Shin M."/>
            <person name="Vergez L."/>
            <person name="Schmutz J."/>
            <person name="Larimer F."/>
            <person name="Land M."/>
            <person name="Hauser L."/>
            <person name="Kyrpides N."/>
            <person name="Mikhailova N."/>
            <person name="Cozen A.E."/>
            <person name="Fitz-Gibbon S.T."/>
            <person name="House C.H."/>
            <person name="Saltikov C."/>
            <person name="Lowe T.M."/>
            <person name="Richardson P."/>
        </authorList>
    </citation>
    <scope>NUCLEOTIDE SEQUENCE [LARGE SCALE GENOMIC DNA]</scope>
    <source>
        <strain>DSM 21063 / JCM 11548 / VA1</strain>
    </source>
</reference>
<dbReference type="EMBL" id="CP000561">
    <property type="protein sequence ID" value="ABO09496.1"/>
    <property type="molecule type" value="Genomic_DNA"/>
</dbReference>
<dbReference type="RefSeq" id="WP_011850754.1">
    <property type="nucleotide sequence ID" value="NC_009073.1"/>
</dbReference>
<dbReference type="SMR" id="A3MXX9"/>
<dbReference type="STRING" id="410359.Pcal_2081"/>
<dbReference type="GeneID" id="4909237"/>
<dbReference type="KEGG" id="pcl:Pcal_2081"/>
<dbReference type="eggNOG" id="arCOG00415">
    <property type="taxonomic scope" value="Archaea"/>
</dbReference>
<dbReference type="HOGENOM" id="CLU_041732_0_0_2"/>
<dbReference type="OrthoDB" id="31129at2157"/>
<dbReference type="Proteomes" id="UP000001431">
    <property type="component" value="Chromosome"/>
</dbReference>
<dbReference type="GO" id="GO:0005524">
    <property type="term" value="F:ATP binding"/>
    <property type="evidence" value="ECO:0007669"/>
    <property type="project" value="UniProtKB-UniRule"/>
</dbReference>
<dbReference type="GO" id="GO:0016887">
    <property type="term" value="F:ATP hydrolysis activity"/>
    <property type="evidence" value="ECO:0007669"/>
    <property type="project" value="InterPro"/>
</dbReference>
<dbReference type="GO" id="GO:0140664">
    <property type="term" value="F:ATP-dependent DNA damage sensor activity"/>
    <property type="evidence" value="ECO:0007669"/>
    <property type="project" value="InterPro"/>
</dbReference>
<dbReference type="GO" id="GO:0003684">
    <property type="term" value="F:damaged DNA binding"/>
    <property type="evidence" value="ECO:0007669"/>
    <property type="project" value="UniProtKB-UniRule"/>
</dbReference>
<dbReference type="GO" id="GO:0006310">
    <property type="term" value="P:DNA recombination"/>
    <property type="evidence" value="ECO:0007669"/>
    <property type="project" value="UniProtKB-UniRule"/>
</dbReference>
<dbReference type="GO" id="GO:0006281">
    <property type="term" value="P:DNA repair"/>
    <property type="evidence" value="ECO:0007669"/>
    <property type="project" value="UniProtKB-UniRule"/>
</dbReference>
<dbReference type="CDD" id="cd19515">
    <property type="entry name" value="archRadA"/>
    <property type="match status" value="1"/>
</dbReference>
<dbReference type="FunFam" id="3.40.50.300:FF:002052">
    <property type="entry name" value="DNA repair protein RAD51 homolog"/>
    <property type="match status" value="1"/>
</dbReference>
<dbReference type="Gene3D" id="1.10.150.20">
    <property type="entry name" value="5' to 3' exonuclease, C-terminal subdomain"/>
    <property type="match status" value="1"/>
</dbReference>
<dbReference type="Gene3D" id="3.40.50.300">
    <property type="entry name" value="P-loop containing nucleotide triphosphate hydrolases"/>
    <property type="match status" value="1"/>
</dbReference>
<dbReference type="HAMAP" id="MF_00348">
    <property type="entry name" value="RadA_arch"/>
    <property type="match status" value="1"/>
</dbReference>
<dbReference type="InterPro" id="IPR003593">
    <property type="entry name" value="AAA+_ATPase"/>
</dbReference>
<dbReference type="InterPro" id="IPR013632">
    <property type="entry name" value="DNA_recomb/repair_Rad51_C"/>
</dbReference>
<dbReference type="InterPro" id="IPR011938">
    <property type="entry name" value="DNA_recomb/repair_RadA"/>
</dbReference>
<dbReference type="InterPro" id="IPR016467">
    <property type="entry name" value="DNA_recomb/repair_RecA-like"/>
</dbReference>
<dbReference type="InterPro" id="IPR010995">
    <property type="entry name" value="DNA_repair_Rad51/TF_NusA_a-hlx"/>
</dbReference>
<dbReference type="InterPro" id="IPR027417">
    <property type="entry name" value="P-loop_NTPase"/>
</dbReference>
<dbReference type="InterPro" id="IPR020588">
    <property type="entry name" value="RecA_ATP-bd"/>
</dbReference>
<dbReference type="InterPro" id="IPR020587">
    <property type="entry name" value="RecA_monomer-monomer_interface"/>
</dbReference>
<dbReference type="NCBIfam" id="NF003301">
    <property type="entry name" value="PRK04301.1"/>
    <property type="match status" value="1"/>
</dbReference>
<dbReference type="NCBIfam" id="TIGR02236">
    <property type="entry name" value="recomb_radA"/>
    <property type="match status" value="1"/>
</dbReference>
<dbReference type="PANTHER" id="PTHR22942:SF30">
    <property type="entry name" value="MEIOTIC RECOMBINATION PROTEIN DMC1_LIM15 HOMOLOG"/>
    <property type="match status" value="1"/>
</dbReference>
<dbReference type="PANTHER" id="PTHR22942">
    <property type="entry name" value="RECA/RAD51/RADA DNA STRAND-PAIRING FAMILY MEMBER"/>
    <property type="match status" value="1"/>
</dbReference>
<dbReference type="Pfam" id="PF14520">
    <property type="entry name" value="HHH_5"/>
    <property type="match status" value="1"/>
</dbReference>
<dbReference type="Pfam" id="PF08423">
    <property type="entry name" value="Rad51"/>
    <property type="match status" value="1"/>
</dbReference>
<dbReference type="PIRSF" id="PIRSF005856">
    <property type="entry name" value="Rad51"/>
    <property type="match status" value="1"/>
</dbReference>
<dbReference type="SMART" id="SM00382">
    <property type="entry name" value="AAA"/>
    <property type="match status" value="1"/>
</dbReference>
<dbReference type="SUPFAM" id="SSF52540">
    <property type="entry name" value="P-loop containing nucleoside triphosphate hydrolases"/>
    <property type="match status" value="1"/>
</dbReference>
<dbReference type="SUPFAM" id="SSF47794">
    <property type="entry name" value="Rad51 N-terminal domain-like"/>
    <property type="match status" value="1"/>
</dbReference>
<dbReference type="PROSITE" id="PS50162">
    <property type="entry name" value="RECA_2"/>
    <property type="match status" value="1"/>
</dbReference>
<dbReference type="PROSITE" id="PS50163">
    <property type="entry name" value="RECA_3"/>
    <property type="match status" value="1"/>
</dbReference>